<reference key="1">
    <citation type="submission" date="2005-07" db="EMBL/GenBank/DDBJ databases">
        <authorList>
            <person name="Mural R.J."/>
            <person name="Adams M.D."/>
            <person name="Myers E.W."/>
            <person name="Smith H.O."/>
            <person name="Venter J.C."/>
        </authorList>
    </citation>
    <scope>NUCLEOTIDE SEQUENCE [LARGE SCALE GENOMIC DNA]</scope>
    <source>
        <strain>Brown Norway</strain>
    </source>
</reference>
<reference key="2">
    <citation type="journal article" date="2004" name="Genome Res.">
        <title>The status, quality, and expansion of the NIH full-length cDNA project: the Mammalian Gene Collection (MGC).</title>
        <authorList>
            <consortium name="The MGC Project Team"/>
        </authorList>
    </citation>
    <scope>NUCLEOTIDE SEQUENCE [LARGE SCALE MRNA]</scope>
    <source>
        <tissue>Lung</tissue>
    </source>
</reference>
<reference key="3">
    <citation type="submission" date="2001-06" db="EMBL/GenBank/DDBJ databases">
        <title>Molecular characterization of mammalian carbonyl/retinal reductases.</title>
        <authorList>
            <person name="Hara A."/>
            <person name="Imamura Y."/>
            <person name="Abe H."/>
            <person name="Inoue S."/>
            <person name="Ishikura S."/>
        </authorList>
    </citation>
    <scope>NUCLEOTIDE SEQUENCE [MRNA] OF 20-279</scope>
    <source>
        <strain>Wistar</strain>
        <tissue>Heart</tissue>
    </source>
</reference>
<proteinExistence type="evidence at transcript level"/>
<organism>
    <name type="scientific">Rattus norvegicus</name>
    <name type="common">Rat</name>
    <dbReference type="NCBI Taxonomy" id="10116"/>
    <lineage>
        <taxon>Eukaryota</taxon>
        <taxon>Metazoa</taxon>
        <taxon>Chordata</taxon>
        <taxon>Craniata</taxon>
        <taxon>Vertebrata</taxon>
        <taxon>Euteleostomi</taxon>
        <taxon>Mammalia</taxon>
        <taxon>Eutheria</taxon>
        <taxon>Euarchontoglires</taxon>
        <taxon>Glires</taxon>
        <taxon>Rodentia</taxon>
        <taxon>Myomorpha</taxon>
        <taxon>Muroidea</taxon>
        <taxon>Muridae</taxon>
        <taxon>Murinae</taxon>
        <taxon>Rattus</taxon>
    </lineage>
</organism>
<keyword id="KW-0007">Acetylation</keyword>
<keyword id="KW-0521">NADP</keyword>
<keyword id="KW-0560">Oxidoreductase</keyword>
<keyword id="KW-0576">Peroxisome</keyword>
<keyword id="KW-0597">Phosphoprotein</keyword>
<keyword id="KW-1185">Reference proteome</keyword>
<accession>Q8VID1</accession>
<accession>Q6IRD4</accession>
<name>DHRS4_RAT</name>
<feature type="chain" id="PRO_0000054652" description="Dehydrogenase/reductase SDR family member 4">
    <location>
        <begin position="1"/>
        <end position="279"/>
    </location>
</feature>
<feature type="short sequence motif" description="Peroxisomal targeting signal">
    <location>
        <begin position="277"/>
        <end position="279"/>
    </location>
</feature>
<feature type="active site" description="Proton acceptor" evidence="5">
    <location>
        <position position="183"/>
    </location>
</feature>
<feature type="binding site" evidence="1">
    <location>
        <begin position="37"/>
        <end position="61"/>
    </location>
    <ligand>
        <name>NADP(+)</name>
        <dbReference type="ChEBI" id="CHEBI:58349"/>
    </ligand>
</feature>
<feature type="binding site" evidence="2">
    <location>
        <position position="170"/>
    </location>
    <ligand>
        <name>substrate</name>
    </ligand>
</feature>
<feature type="binding site" evidence="1">
    <location>
        <position position="187"/>
    </location>
    <ligand>
        <name>NADP(+)</name>
        <dbReference type="ChEBI" id="CHEBI:58349"/>
    </ligand>
</feature>
<feature type="site" description="Responsible for the stereoselective reduction of 3-ketosteroids into 3alpha-hydroxysteroids and benzil into S-benzoin" evidence="1">
    <location>
        <position position="177"/>
    </location>
</feature>
<feature type="site" description="Responsible for the stereoselective reduction of 3-ketosteroids into 3alpha-hydroxysteroids and benzil into S-benzoin" evidence="1">
    <location>
        <position position="180"/>
    </location>
</feature>
<feature type="site" description="Important for the maintenance of the quaternary structure, the catalytic activity and cold stability" evidence="1">
    <location>
        <position position="196"/>
    </location>
</feature>
<feature type="modified residue" description="N6-acetyllysine; alternate" evidence="3">
    <location>
        <position position="93"/>
    </location>
</feature>
<feature type="modified residue" description="N6-succinyllysine; alternate" evidence="3">
    <location>
        <position position="93"/>
    </location>
</feature>
<feature type="modified residue" description="N6-acetyllysine" evidence="3">
    <location>
        <position position="106"/>
    </location>
</feature>
<feature type="modified residue" description="N6-acetyllysine; alternate" evidence="3">
    <location>
        <position position="217"/>
    </location>
</feature>
<feature type="modified residue" description="N6-succinyllysine; alternate" evidence="3">
    <location>
        <position position="217"/>
    </location>
</feature>
<feature type="modified residue" description="Phosphoserine" evidence="3">
    <location>
        <position position="221"/>
    </location>
</feature>
<feature type="modified residue" description="N6-succinyllysine" evidence="3">
    <location>
        <position position="228"/>
    </location>
</feature>
<feature type="modified residue" description="N6-succinyllysine" evidence="3">
    <location>
        <position position="235"/>
    </location>
</feature>
<sequence length="279" mass="29822">MQKAGLLLRGWTRAWKSVRMASSGLTRQNPLANKVALVTASTDGIGLAIARRLAEDGAHVVISSRKQQNVDRAVATLQGEGLSVTGVVCHVGKAEDREKLVNMALKLHQGIDILVSNAAVNPFFGNLMDVTEEVWNKVLSINVTASAMMIKAVVPAMEKRGGGSVVIVSSVAGFVLFPSLGPYNVSKTALLGLTKNFAAELAPKNIRVNCLAPGLIKTHFSSVLWKEKAREEMIKETMQIRRLGKPEDCVGIVSFLCSEDASYINGETVVVGGGTPSRL</sequence>
<comment type="function">
    <text evidence="1">NADPH-dependent oxidoreductase which catalyzes the reduction of a variety of compounds bearing carbonyl groups including ketosteroids, alpha-dicarbonyl compounds, aldehydes, aromatic ketones and quinones. Reduces all-trans-retinal and 9-cis retinal. Reduces 3-ketosteroids and benzil into 3alpha-hydroxysteroids and S-benzoin, respectively, in contrast to the stereoselectivity of primates DHRS4s which produce 3beta-hydroxysteroids and R-benzoin. In the reverse reaction, catalyzes the NADP-dependent oxidation of 3alpha-hydroxysteroids and alcohol, but with much lower efficiency. Involved in the metabolism of 3alpha-hydroxysteroids, retinoid, isatin and xenobiotic carbonyl compounds.</text>
</comment>
<comment type="catalytic activity">
    <reaction evidence="1">
        <text>a secondary alcohol + NADP(+) = a ketone + NADPH + H(+)</text>
        <dbReference type="Rhea" id="RHEA:19257"/>
        <dbReference type="ChEBI" id="CHEBI:15378"/>
        <dbReference type="ChEBI" id="CHEBI:17087"/>
        <dbReference type="ChEBI" id="CHEBI:35681"/>
        <dbReference type="ChEBI" id="CHEBI:57783"/>
        <dbReference type="ChEBI" id="CHEBI:58349"/>
        <dbReference type="EC" id="1.1.1.184"/>
    </reaction>
    <physiologicalReaction direction="right-to-left" evidence="1">
        <dbReference type="Rhea" id="RHEA:19259"/>
    </physiologicalReaction>
</comment>
<comment type="catalytic activity">
    <reaction evidence="1">
        <text>3alpha-hydroxy-5beta-pregnan-20-one + NADP(+) = 5beta-pregnan-3,20-dione + NADPH + H(+)</text>
        <dbReference type="Rhea" id="RHEA:69016"/>
        <dbReference type="ChEBI" id="CHEBI:1712"/>
        <dbReference type="ChEBI" id="CHEBI:15378"/>
        <dbReference type="ChEBI" id="CHEBI:30154"/>
        <dbReference type="ChEBI" id="CHEBI:57783"/>
        <dbReference type="ChEBI" id="CHEBI:58349"/>
    </reaction>
    <physiologicalReaction direction="left-to-right" evidence="1">
        <dbReference type="Rhea" id="RHEA:69017"/>
    </physiologicalReaction>
</comment>
<comment type="catalytic activity">
    <reaction evidence="1">
        <text>5beta-dihydrotestosterone + NADPH + H(+) = 5beta-androstane-3alpha,17beta-diol + NADP(+)</text>
        <dbReference type="Rhea" id="RHEA:69028"/>
        <dbReference type="ChEBI" id="CHEBI:2150"/>
        <dbReference type="ChEBI" id="CHEBI:15378"/>
        <dbReference type="ChEBI" id="CHEBI:36714"/>
        <dbReference type="ChEBI" id="CHEBI:57783"/>
        <dbReference type="ChEBI" id="CHEBI:58349"/>
    </reaction>
    <physiologicalReaction direction="left-to-right" evidence="1">
        <dbReference type="Rhea" id="RHEA:69029"/>
    </physiologicalReaction>
</comment>
<comment type="catalytic activity">
    <reaction evidence="1">
        <text>all-trans-retinol + NADP(+) = all-trans-retinal + NADPH + H(+)</text>
        <dbReference type="Rhea" id="RHEA:25033"/>
        <dbReference type="ChEBI" id="CHEBI:15378"/>
        <dbReference type="ChEBI" id="CHEBI:17336"/>
        <dbReference type="ChEBI" id="CHEBI:17898"/>
        <dbReference type="ChEBI" id="CHEBI:57783"/>
        <dbReference type="ChEBI" id="CHEBI:58349"/>
        <dbReference type="EC" id="1.1.1.300"/>
    </reaction>
    <physiologicalReaction direction="right-to-left" evidence="1">
        <dbReference type="Rhea" id="RHEA:25035"/>
    </physiologicalReaction>
</comment>
<comment type="catalytic activity">
    <reaction evidence="1">
        <text>isatin + NADPH + H(+) = 3-hydroxyindolin-2-one + NADP(+)</text>
        <dbReference type="Rhea" id="RHEA:68608"/>
        <dbReference type="ChEBI" id="CHEBI:15378"/>
        <dbReference type="ChEBI" id="CHEBI:27539"/>
        <dbReference type="ChEBI" id="CHEBI:28536"/>
        <dbReference type="ChEBI" id="CHEBI:57783"/>
        <dbReference type="ChEBI" id="CHEBI:58349"/>
    </reaction>
    <physiologicalReaction direction="left-to-right" evidence="1">
        <dbReference type="Rhea" id="RHEA:68609"/>
    </physiologicalReaction>
</comment>
<comment type="subunit">
    <text evidence="1">Homotetramer.</text>
</comment>
<comment type="subcellular location">
    <subcellularLocation>
        <location evidence="1">Peroxisome</location>
    </subcellularLocation>
</comment>
<comment type="domain">
    <text evidence="1">The C-terminus peroxisomal targeting signal tripeptide is important for peroxisomal import. Once in the peroxisome, it is involved in intersubunit interactions.</text>
</comment>
<comment type="domain">
    <text evidence="1">Three specific residues, Phe-177, Leu-180 and Asn-196 are conserved between non-primate mammals whereas the respective residues are serine, phenylalanine and threonine in primates. The two residues at positions 177 and 180 are molecular determinants responsible for the stereoselective reduction of 3-ketosteroids and benzil. The presence of an asparagine at position 196 is important for the maintenance of the quaternary structure resulting in stability at cold temperature and improved catalytic activity toward retinal.</text>
</comment>
<comment type="miscellaneous">
    <text evidence="1">Primate DHRS4s display different stereoselectivity and catalytic efficiency in the oxidoreduction of some substrates as compared to other mammal DHRS4s due to a difference in conserved amino acid residues.</text>
</comment>
<comment type="similarity">
    <text evidence="6">Belongs to the short-chain dehydrogenases/reductases (SDR) family.</text>
</comment>
<comment type="sequence caution" evidence="6">
    <conflict type="erroneous initiation">
        <sequence resource="EMBL-CDS" id="BAB78529"/>
    </conflict>
    <text>Truncated N-terminus.</text>
</comment>
<gene>
    <name type="primary">Dhrs4</name>
</gene>
<protein>
    <recommendedName>
        <fullName evidence="1">Dehydrogenase/reductase SDR family member 4</fullName>
        <ecNumber evidence="1">1.1.1.184</ecNumber>
        <ecNumber evidence="1">1.1.1.300</ecNumber>
    </recommendedName>
    <alternativeName>
        <fullName evidence="1">NADPH-dependent carbonyl reductase</fullName>
        <shortName evidence="1">CR</shortName>
    </alternativeName>
    <alternativeName>
        <fullName evidence="1">NADPH-dependent retinol dehydrogenase/reductase</fullName>
        <shortName evidence="1">NDRD</shortName>
    </alternativeName>
    <alternativeName>
        <fullName>Peroxisomal short-chain alcohol dehydrogenase</fullName>
        <shortName>PSCD</shortName>
    </alternativeName>
    <alternativeName>
        <fullName evidence="4">Short chain dehydrogenase/reductase family 25C member 2</fullName>
        <shortName evidence="4">Protein SDR25C2</shortName>
    </alternativeName>
</protein>
<dbReference type="EC" id="1.1.1.184" evidence="1"/>
<dbReference type="EC" id="1.1.1.300" evidence="1"/>
<dbReference type="EMBL" id="CH474049">
    <property type="protein sequence ID" value="EDM14225.1"/>
    <property type="molecule type" value="Genomic_DNA"/>
</dbReference>
<dbReference type="EMBL" id="BC070961">
    <property type="protein sequence ID" value="AAH70961.1"/>
    <property type="molecule type" value="mRNA"/>
</dbReference>
<dbReference type="EMBL" id="AB062758">
    <property type="protein sequence ID" value="BAB78529.1"/>
    <property type="status" value="ALT_INIT"/>
    <property type="molecule type" value="mRNA"/>
</dbReference>
<dbReference type="RefSeq" id="NP_001420350.1">
    <property type="nucleotide sequence ID" value="NM_001433421.1"/>
</dbReference>
<dbReference type="RefSeq" id="NP_695227.2">
    <property type="nucleotide sequence ID" value="NM_153315.3"/>
</dbReference>
<dbReference type="RefSeq" id="XP_063130103.1">
    <property type="nucleotide sequence ID" value="XM_063274033.1"/>
</dbReference>
<dbReference type="SMR" id="Q8VID1"/>
<dbReference type="BioGRID" id="251774">
    <property type="interactions" value="1"/>
</dbReference>
<dbReference type="FunCoup" id="Q8VID1">
    <property type="interactions" value="1422"/>
</dbReference>
<dbReference type="IntAct" id="Q8VID1">
    <property type="interactions" value="9"/>
</dbReference>
<dbReference type="STRING" id="10116.ENSRNOP00000024782"/>
<dbReference type="GlyGen" id="Q8VID1">
    <property type="glycosylation" value="1 site"/>
</dbReference>
<dbReference type="iPTMnet" id="Q8VID1"/>
<dbReference type="PhosphoSitePlus" id="Q8VID1"/>
<dbReference type="SwissPalm" id="Q8VID1"/>
<dbReference type="PaxDb" id="10116-ENSRNOP00000024782"/>
<dbReference type="Ensembl" id="ENSRNOT00000024782.5">
    <property type="protein sequence ID" value="ENSRNOP00000024782.3"/>
    <property type="gene ID" value="ENSRNOG00000018239.5"/>
</dbReference>
<dbReference type="GeneID" id="266686"/>
<dbReference type="KEGG" id="rno:266686"/>
<dbReference type="UCSC" id="RGD:708482">
    <property type="organism name" value="rat"/>
</dbReference>
<dbReference type="AGR" id="RGD:708482"/>
<dbReference type="CTD" id="10901"/>
<dbReference type="RGD" id="708482">
    <property type="gene designation" value="Dhrs4"/>
</dbReference>
<dbReference type="eggNOG" id="KOG0725">
    <property type="taxonomic scope" value="Eukaryota"/>
</dbReference>
<dbReference type="GeneTree" id="ENSGT00940000158919"/>
<dbReference type="HOGENOM" id="CLU_010194_1_1_1"/>
<dbReference type="InParanoid" id="Q8VID1"/>
<dbReference type="OMA" id="WEVANVI"/>
<dbReference type="OrthoDB" id="3592703at2759"/>
<dbReference type="PhylomeDB" id="Q8VID1"/>
<dbReference type="TreeFam" id="TF315405"/>
<dbReference type="Reactome" id="R-RNO-5365859">
    <property type="pathway name" value="RA biosynthesis pathway"/>
</dbReference>
<dbReference type="Reactome" id="R-RNO-9033241">
    <property type="pathway name" value="Peroxisomal protein import"/>
</dbReference>
<dbReference type="PRO" id="PR:Q8VID1"/>
<dbReference type="Proteomes" id="UP000002494">
    <property type="component" value="Chromosome 15"/>
</dbReference>
<dbReference type="Proteomes" id="UP000234681">
    <property type="component" value="Chromosome 15"/>
</dbReference>
<dbReference type="Bgee" id="ENSRNOG00000018239">
    <property type="expression patterns" value="Expressed in kidney and 20 other cell types or tissues"/>
</dbReference>
<dbReference type="GO" id="GO:0005739">
    <property type="term" value="C:mitochondrion"/>
    <property type="evidence" value="ECO:0000250"/>
    <property type="project" value="UniProtKB"/>
</dbReference>
<dbReference type="GO" id="GO:0005778">
    <property type="term" value="C:peroxisomal membrane"/>
    <property type="evidence" value="ECO:0000266"/>
    <property type="project" value="RGD"/>
</dbReference>
<dbReference type="GO" id="GO:0005777">
    <property type="term" value="C:peroxisome"/>
    <property type="evidence" value="ECO:0000314"/>
    <property type="project" value="RGD"/>
</dbReference>
<dbReference type="GO" id="GO:0000253">
    <property type="term" value="F:3-beta-hydroxysteroid 3-dehydrogenase (NADP+) activity"/>
    <property type="evidence" value="ECO:0000266"/>
    <property type="project" value="RGD"/>
</dbReference>
<dbReference type="GO" id="GO:0018455">
    <property type="term" value="F:alcohol dehydrogenase [NAD(P)+] activity"/>
    <property type="evidence" value="ECO:0000266"/>
    <property type="project" value="RGD"/>
</dbReference>
<dbReference type="GO" id="GO:0052650">
    <property type="term" value="F:all-trans-retinol dehydrogenase (NADP+) activity"/>
    <property type="evidence" value="ECO:0000250"/>
    <property type="project" value="UniProtKB"/>
</dbReference>
<dbReference type="GO" id="GO:0004090">
    <property type="term" value="F:carbonyl reductase (NADPH) activity"/>
    <property type="evidence" value="ECO:0000266"/>
    <property type="project" value="RGD"/>
</dbReference>
<dbReference type="GO" id="GO:0042802">
    <property type="term" value="F:identical protein binding"/>
    <property type="evidence" value="ECO:0000250"/>
    <property type="project" value="UniProtKB"/>
</dbReference>
<dbReference type="GO" id="GO:0016655">
    <property type="term" value="F:oxidoreductase activity, acting on NAD(P)H, quinone or similar compound as acceptor"/>
    <property type="evidence" value="ECO:0000266"/>
    <property type="project" value="RGD"/>
</dbReference>
<dbReference type="GO" id="GO:0001758">
    <property type="term" value="F:retinal dehydrogenase activity"/>
    <property type="evidence" value="ECO:0000266"/>
    <property type="project" value="RGD"/>
</dbReference>
<dbReference type="GO" id="GO:0006066">
    <property type="term" value="P:alcohol metabolic process"/>
    <property type="evidence" value="ECO:0000266"/>
    <property type="project" value="RGD"/>
</dbReference>
<dbReference type="GO" id="GO:0042180">
    <property type="term" value="P:ketone metabolic process"/>
    <property type="evidence" value="ECO:0000250"/>
    <property type="project" value="UniProtKB"/>
</dbReference>
<dbReference type="GO" id="GO:2000379">
    <property type="term" value="P:positive regulation of reactive oxygen species metabolic process"/>
    <property type="evidence" value="ECO:0000266"/>
    <property type="project" value="RGD"/>
</dbReference>
<dbReference type="GO" id="GO:0042574">
    <property type="term" value="P:retinal metabolic process"/>
    <property type="evidence" value="ECO:0000266"/>
    <property type="project" value="RGD"/>
</dbReference>
<dbReference type="GO" id="GO:0001523">
    <property type="term" value="P:retinoid metabolic process"/>
    <property type="evidence" value="ECO:0000250"/>
    <property type="project" value="UniProtKB"/>
</dbReference>
<dbReference type="GO" id="GO:0008202">
    <property type="term" value="P:steroid metabolic process"/>
    <property type="evidence" value="ECO:0000250"/>
    <property type="project" value="UniProtKB"/>
</dbReference>
<dbReference type="CDD" id="cd08936">
    <property type="entry name" value="CR_SDR_c"/>
    <property type="match status" value="1"/>
</dbReference>
<dbReference type="FunFam" id="3.40.50.720:FF:000084">
    <property type="entry name" value="Short-chain dehydrogenase reductase"/>
    <property type="match status" value="1"/>
</dbReference>
<dbReference type="Gene3D" id="3.40.50.720">
    <property type="entry name" value="NAD(P)-binding Rossmann-like Domain"/>
    <property type="match status" value="1"/>
</dbReference>
<dbReference type="InterPro" id="IPR036291">
    <property type="entry name" value="NAD(P)-bd_dom_sf"/>
</dbReference>
<dbReference type="InterPro" id="IPR020904">
    <property type="entry name" value="Sc_DH/Rdtase_CS"/>
</dbReference>
<dbReference type="InterPro" id="IPR002347">
    <property type="entry name" value="SDR_fam"/>
</dbReference>
<dbReference type="NCBIfam" id="NF005559">
    <property type="entry name" value="PRK07231.1"/>
    <property type="match status" value="1"/>
</dbReference>
<dbReference type="PANTHER" id="PTHR43943">
    <property type="entry name" value="DEHYDROGENASE/REDUCTASE (SDR FAMILY) MEMBER 4"/>
    <property type="match status" value="1"/>
</dbReference>
<dbReference type="PANTHER" id="PTHR43943:SF8">
    <property type="entry name" value="DEHYDROGENASE_REDUCTASE SDR FAMILY MEMBER 4-RELATED"/>
    <property type="match status" value="1"/>
</dbReference>
<dbReference type="Pfam" id="PF13561">
    <property type="entry name" value="adh_short_C2"/>
    <property type="match status" value="1"/>
</dbReference>
<dbReference type="PRINTS" id="PR00081">
    <property type="entry name" value="GDHRDH"/>
</dbReference>
<dbReference type="PRINTS" id="PR00080">
    <property type="entry name" value="SDRFAMILY"/>
</dbReference>
<dbReference type="SUPFAM" id="SSF51735">
    <property type="entry name" value="NAD(P)-binding Rossmann-fold domains"/>
    <property type="match status" value="1"/>
</dbReference>
<dbReference type="PROSITE" id="PS00061">
    <property type="entry name" value="ADH_SHORT"/>
    <property type="match status" value="1"/>
</dbReference>
<evidence type="ECO:0000250" key="1">
    <source>
        <dbReference type="UniProtKB" id="Q8WNV7"/>
    </source>
</evidence>
<evidence type="ECO:0000250" key="2">
    <source>
        <dbReference type="UniProtKB" id="Q99714"/>
    </source>
</evidence>
<evidence type="ECO:0000250" key="3">
    <source>
        <dbReference type="UniProtKB" id="Q99LB2"/>
    </source>
</evidence>
<evidence type="ECO:0000250" key="4">
    <source>
        <dbReference type="UniProtKB" id="Q9BTZ2"/>
    </source>
</evidence>
<evidence type="ECO:0000255" key="5">
    <source>
        <dbReference type="PROSITE-ProRule" id="PRU10001"/>
    </source>
</evidence>
<evidence type="ECO:0000305" key="6"/>